<geneLocation type="mitochondrion"/>
<feature type="chain" id="PRO_0000060964" description="Cytochrome b">
    <location>
        <begin position="1"/>
        <end position="379"/>
    </location>
</feature>
<feature type="transmembrane region" description="Helical" evidence="2">
    <location>
        <begin position="33"/>
        <end position="53"/>
    </location>
</feature>
<feature type="transmembrane region" description="Helical" evidence="2">
    <location>
        <begin position="77"/>
        <end position="98"/>
    </location>
</feature>
<feature type="transmembrane region" description="Helical" evidence="2">
    <location>
        <begin position="113"/>
        <end position="133"/>
    </location>
</feature>
<feature type="transmembrane region" description="Helical" evidence="2">
    <location>
        <begin position="178"/>
        <end position="198"/>
    </location>
</feature>
<feature type="transmembrane region" description="Helical" evidence="2">
    <location>
        <begin position="226"/>
        <end position="246"/>
    </location>
</feature>
<feature type="transmembrane region" description="Helical" evidence="2">
    <location>
        <begin position="288"/>
        <end position="308"/>
    </location>
</feature>
<feature type="transmembrane region" description="Helical" evidence="2">
    <location>
        <begin position="320"/>
        <end position="340"/>
    </location>
</feature>
<feature type="transmembrane region" description="Helical" evidence="2">
    <location>
        <begin position="347"/>
        <end position="367"/>
    </location>
</feature>
<feature type="binding site" description="axial binding residue" evidence="2">
    <location>
        <position position="83"/>
    </location>
    <ligand>
        <name>heme b</name>
        <dbReference type="ChEBI" id="CHEBI:60344"/>
        <label>b562</label>
    </ligand>
    <ligandPart>
        <name>Fe</name>
        <dbReference type="ChEBI" id="CHEBI:18248"/>
    </ligandPart>
</feature>
<feature type="binding site" description="axial binding residue" evidence="2">
    <location>
        <position position="97"/>
    </location>
    <ligand>
        <name>heme b</name>
        <dbReference type="ChEBI" id="CHEBI:60344"/>
        <label>b566</label>
    </ligand>
    <ligandPart>
        <name>Fe</name>
        <dbReference type="ChEBI" id="CHEBI:18248"/>
    </ligandPart>
</feature>
<feature type="binding site" description="axial binding residue" evidence="2">
    <location>
        <position position="182"/>
    </location>
    <ligand>
        <name>heme b</name>
        <dbReference type="ChEBI" id="CHEBI:60344"/>
        <label>b562</label>
    </ligand>
    <ligandPart>
        <name>Fe</name>
        <dbReference type="ChEBI" id="CHEBI:18248"/>
    </ligandPart>
</feature>
<feature type="binding site" description="axial binding residue" evidence="2">
    <location>
        <position position="196"/>
    </location>
    <ligand>
        <name>heme b</name>
        <dbReference type="ChEBI" id="CHEBI:60344"/>
        <label>b566</label>
    </ligand>
    <ligandPart>
        <name>Fe</name>
        <dbReference type="ChEBI" id="CHEBI:18248"/>
    </ligandPart>
</feature>
<feature type="binding site" evidence="2">
    <location>
        <position position="201"/>
    </location>
    <ligand>
        <name>a ubiquinone</name>
        <dbReference type="ChEBI" id="CHEBI:16389"/>
    </ligand>
</feature>
<gene>
    <name type="primary">MT-CYB</name>
    <name type="synonym">COB</name>
    <name type="synonym">CYTB</name>
    <name type="synonym">MTCYB</name>
</gene>
<name>CYB_EUOEL</name>
<organism>
    <name type="scientific">Euoticus elegantulus</name>
    <name type="common">Southern needle-clawed bushbaby</name>
    <dbReference type="NCBI Taxonomy" id="261736"/>
    <lineage>
        <taxon>Eukaryota</taxon>
        <taxon>Metazoa</taxon>
        <taxon>Chordata</taxon>
        <taxon>Craniata</taxon>
        <taxon>Vertebrata</taxon>
        <taxon>Euteleostomi</taxon>
        <taxon>Mammalia</taxon>
        <taxon>Eutheria</taxon>
        <taxon>Euarchontoglires</taxon>
        <taxon>Primates</taxon>
        <taxon>Strepsirrhini</taxon>
        <taxon>Lorisiformes</taxon>
        <taxon>Galagidae</taxon>
        <taxon>Euoticus</taxon>
    </lineage>
</organism>
<proteinExistence type="inferred from homology"/>
<sequence length="379" mass="42800">MTNIRKQHPLAKMINHSFIDLPAPSNISSWWNFGSLLGLCLMIQIITGLFLAMHYTSDTSTAFSSVTHICRDVNYGWTIRYLHANGASMFFICLFMHIGRGLYYGSFTFLETWNIGVILLFTVMATAFMGYVLPWGQMSFWGATVITNLLSAIPYMGTGLVEWIWGGFSVDKATLTRFFAFHFILPFIIAALAMIHLLFLHETGSNNPSGISSDSDKIPFHPYYTIKDLLGAILLLLCLFSLVLFSPDLLGDPDNYTPANPLNTPPHIKPEWYFLFAYAILRSIPNKLGGVLALVFSILILTLIPFLHTAKQRSMMFRPLSQCLYWMLVADLLTLTWIGGQPVENPFITIGQTASIIYFLIILILMPLTNLLENKLLKW</sequence>
<accession>Q5VJ44</accession>
<keyword id="KW-0249">Electron transport</keyword>
<keyword id="KW-0349">Heme</keyword>
<keyword id="KW-0408">Iron</keyword>
<keyword id="KW-0472">Membrane</keyword>
<keyword id="KW-0479">Metal-binding</keyword>
<keyword id="KW-0496">Mitochondrion</keyword>
<keyword id="KW-0999">Mitochondrion inner membrane</keyword>
<keyword id="KW-0679">Respiratory chain</keyword>
<keyword id="KW-0812">Transmembrane</keyword>
<keyword id="KW-1133">Transmembrane helix</keyword>
<keyword id="KW-0813">Transport</keyword>
<keyword id="KW-0830">Ubiquinone</keyword>
<protein>
    <recommendedName>
        <fullName>Cytochrome b</fullName>
    </recommendedName>
    <alternativeName>
        <fullName>Complex III subunit 3</fullName>
    </alternativeName>
    <alternativeName>
        <fullName>Complex III subunit III</fullName>
    </alternativeName>
    <alternativeName>
        <fullName>Cytochrome b-c1 complex subunit 3</fullName>
    </alternativeName>
    <alternativeName>
        <fullName>Ubiquinol-cytochrome-c reductase complex cytochrome b subunit</fullName>
    </alternativeName>
</protein>
<reference key="1">
    <citation type="submission" date="2003-10" db="EMBL/GenBank/DDBJ databases">
        <title>61 primate SINEs and the evolution of strepsirrhines.</title>
        <authorList>
            <person name="Roos C."/>
            <person name="Schmitz J."/>
            <person name="Zischler H."/>
        </authorList>
    </citation>
    <scope>NUCLEOTIDE SEQUENCE [GENOMIC DNA]</scope>
</reference>
<comment type="function">
    <text evidence="2">Component of the ubiquinol-cytochrome c reductase complex (complex III or cytochrome b-c1 complex) that is part of the mitochondrial respiratory chain. The b-c1 complex mediates electron transfer from ubiquinol to cytochrome c. Contributes to the generation of a proton gradient across the mitochondrial membrane that is then used for ATP synthesis.</text>
</comment>
<comment type="cofactor">
    <cofactor evidence="2">
        <name>heme b</name>
        <dbReference type="ChEBI" id="CHEBI:60344"/>
    </cofactor>
    <text evidence="2">Binds 2 heme b groups non-covalently.</text>
</comment>
<comment type="subunit">
    <text evidence="2">The cytochrome bc1 complex contains 11 subunits: 3 respiratory subunits (MT-CYB, CYC1 and UQCRFS1), 2 core proteins (UQCRC1 and UQCRC2) and 6 low-molecular weight proteins (UQCRH/QCR6, UQCRB/QCR7, UQCRQ/QCR8, UQCR10/QCR9, UQCR11/QCR10 and a cleavage product of UQCRFS1). This cytochrome bc1 complex then forms a dimer.</text>
</comment>
<comment type="subcellular location">
    <subcellularLocation>
        <location evidence="2">Mitochondrion inner membrane</location>
        <topology evidence="2">Multi-pass membrane protein</topology>
    </subcellularLocation>
</comment>
<comment type="miscellaneous">
    <text evidence="1">Heme 1 (or BL or b562) is low-potential and absorbs at about 562 nm, and heme 2 (or BH or b566) is high-potential and absorbs at about 566 nm.</text>
</comment>
<comment type="similarity">
    <text evidence="3 4">Belongs to the cytochrome b family.</text>
</comment>
<comment type="caution">
    <text evidence="2">The full-length protein contains only eight transmembrane helices, not nine as predicted by bioinformatics tools.</text>
</comment>
<dbReference type="EMBL" id="AY441469">
    <property type="protein sequence ID" value="AAS00150.1"/>
    <property type="molecule type" value="Genomic_DNA"/>
</dbReference>
<dbReference type="SMR" id="Q5VJ44"/>
<dbReference type="GO" id="GO:0005743">
    <property type="term" value="C:mitochondrial inner membrane"/>
    <property type="evidence" value="ECO:0007669"/>
    <property type="project" value="UniProtKB-SubCell"/>
</dbReference>
<dbReference type="GO" id="GO:0045275">
    <property type="term" value="C:respiratory chain complex III"/>
    <property type="evidence" value="ECO:0007669"/>
    <property type="project" value="InterPro"/>
</dbReference>
<dbReference type="GO" id="GO:0046872">
    <property type="term" value="F:metal ion binding"/>
    <property type="evidence" value="ECO:0007669"/>
    <property type="project" value="UniProtKB-KW"/>
</dbReference>
<dbReference type="GO" id="GO:0008121">
    <property type="term" value="F:ubiquinol-cytochrome-c reductase activity"/>
    <property type="evidence" value="ECO:0007669"/>
    <property type="project" value="InterPro"/>
</dbReference>
<dbReference type="GO" id="GO:0006122">
    <property type="term" value="P:mitochondrial electron transport, ubiquinol to cytochrome c"/>
    <property type="evidence" value="ECO:0007669"/>
    <property type="project" value="TreeGrafter"/>
</dbReference>
<dbReference type="CDD" id="cd00290">
    <property type="entry name" value="cytochrome_b_C"/>
    <property type="match status" value="1"/>
</dbReference>
<dbReference type="CDD" id="cd00284">
    <property type="entry name" value="Cytochrome_b_N"/>
    <property type="match status" value="1"/>
</dbReference>
<dbReference type="FunFam" id="1.20.810.10:FF:000002">
    <property type="entry name" value="Cytochrome b"/>
    <property type="match status" value="1"/>
</dbReference>
<dbReference type="Gene3D" id="1.20.810.10">
    <property type="entry name" value="Cytochrome Bc1 Complex, Chain C"/>
    <property type="match status" value="1"/>
</dbReference>
<dbReference type="InterPro" id="IPR005798">
    <property type="entry name" value="Cyt_b/b6_C"/>
</dbReference>
<dbReference type="InterPro" id="IPR036150">
    <property type="entry name" value="Cyt_b/b6_C_sf"/>
</dbReference>
<dbReference type="InterPro" id="IPR005797">
    <property type="entry name" value="Cyt_b/b6_N"/>
</dbReference>
<dbReference type="InterPro" id="IPR027387">
    <property type="entry name" value="Cytb/b6-like_sf"/>
</dbReference>
<dbReference type="InterPro" id="IPR030689">
    <property type="entry name" value="Cytochrome_b"/>
</dbReference>
<dbReference type="InterPro" id="IPR048260">
    <property type="entry name" value="Cytochrome_b_C_euk/bac"/>
</dbReference>
<dbReference type="InterPro" id="IPR048259">
    <property type="entry name" value="Cytochrome_b_N_euk/bac"/>
</dbReference>
<dbReference type="InterPro" id="IPR016174">
    <property type="entry name" value="Di-haem_cyt_TM"/>
</dbReference>
<dbReference type="PANTHER" id="PTHR19271">
    <property type="entry name" value="CYTOCHROME B"/>
    <property type="match status" value="1"/>
</dbReference>
<dbReference type="PANTHER" id="PTHR19271:SF16">
    <property type="entry name" value="CYTOCHROME B"/>
    <property type="match status" value="1"/>
</dbReference>
<dbReference type="Pfam" id="PF00032">
    <property type="entry name" value="Cytochrom_B_C"/>
    <property type="match status" value="1"/>
</dbReference>
<dbReference type="Pfam" id="PF00033">
    <property type="entry name" value="Cytochrome_B"/>
    <property type="match status" value="1"/>
</dbReference>
<dbReference type="PIRSF" id="PIRSF038885">
    <property type="entry name" value="COB"/>
    <property type="match status" value="1"/>
</dbReference>
<dbReference type="SUPFAM" id="SSF81648">
    <property type="entry name" value="a domain/subunit of cytochrome bc1 complex (Ubiquinol-cytochrome c reductase)"/>
    <property type="match status" value="1"/>
</dbReference>
<dbReference type="SUPFAM" id="SSF81342">
    <property type="entry name" value="Transmembrane di-heme cytochromes"/>
    <property type="match status" value="1"/>
</dbReference>
<dbReference type="PROSITE" id="PS51003">
    <property type="entry name" value="CYTB_CTER"/>
    <property type="match status" value="1"/>
</dbReference>
<dbReference type="PROSITE" id="PS51002">
    <property type="entry name" value="CYTB_NTER"/>
    <property type="match status" value="1"/>
</dbReference>
<evidence type="ECO:0000250" key="1"/>
<evidence type="ECO:0000250" key="2">
    <source>
        <dbReference type="UniProtKB" id="P00157"/>
    </source>
</evidence>
<evidence type="ECO:0000255" key="3">
    <source>
        <dbReference type="PROSITE-ProRule" id="PRU00967"/>
    </source>
</evidence>
<evidence type="ECO:0000255" key="4">
    <source>
        <dbReference type="PROSITE-ProRule" id="PRU00968"/>
    </source>
</evidence>